<reference key="1">
    <citation type="journal article" date="2006" name="J. Bacteriol.">
        <title>Comparative genomic analysis of three strains of Ehrlichia ruminantium reveals an active process of genome size plasticity.</title>
        <authorList>
            <person name="Frutos R."/>
            <person name="Viari A."/>
            <person name="Ferraz C."/>
            <person name="Morgat A."/>
            <person name="Eychenie S."/>
            <person name="Kandassamy Y."/>
            <person name="Chantal I."/>
            <person name="Bensaid A."/>
            <person name="Coissac E."/>
            <person name="Vachiery N."/>
            <person name="Demaille J."/>
            <person name="Martinez D."/>
        </authorList>
    </citation>
    <scope>NUCLEOTIDE SEQUENCE [LARGE SCALE GENOMIC DNA]</scope>
    <source>
        <strain>Gardel</strain>
    </source>
</reference>
<accession>Q5FGV3</accession>
<name>NUOD_EHRRG</name>
<dbReference type="EC" id="7.1.1.-" evidence="1"/>
<dbReference type="EMBL" id="CR925677">
    <property type="protein sequence ID" value="CAI27905.1"/>
    <property type="molecule type" value="Genomic_DNA"/>
</dbReference>
<dbReference type="RefSeq" id="WP_011255581.1">
    <property type="nucleotide sequence ID" value="NC_006831.1"/>
</dbReference>
<dbReference type="SMR" id="Q5FGV3"/>
<dbReference type="KEGG" id="erg:ERGA_CDS_04530"/>
<dbReference type="HOGENOM" id="CLU_015134_1_1_5"/>
<dbReference type="OrthoDB" id="9801496at2"/>
<dbReference type="Proteomes" id="UP000000533">
    <property type="component" value="Chromosome"/>
</dbReference>
<dbReference type="GO" id="GO:0005886">
    <property type="term" value="C:plasma membrane"/>
    <property type="evidence" value="ECO:0007669"/>
    <property type="project" value="UniProtKB-SubCell"/>
</dbReference>
<dbReference type="GO" id="GO:0051287">
    <property type="term" value="F:NAD binding"/>
    <property type="evidence" value="ECO:0007669"/>
    <property type="project" value="InterPro"/>
</dbReference>
<dbReference type="GO" id="GO:0050136">
    <property type="term" value="F:NADH:ubiquinone reductase (non-electrogenic) activity"/>
    <property type="evidence" value="ECO:0007669"/>
    <property type="project" value="UniProtKB-UniRule"/>
</dbReference>
<dbReference type="GO" id="GO:0048038">
    <property type="term" value="F:quinone binding"/>
    <property type="evidence" value="ECO:0007669"/>
    <property type="project" value="UniProtKB-KW"/>
</dbReference>
<dbReference type="FunFam" id="1.10.645.10:FF:000005">
    <property type="entry name" value="NADH-quinone oxidoreductase subunit D"/>
    <property type="match status" value="1"/>
</dbReference>
<dbReference type="Gene3D" id="1.10.645.10">
    <property type="entry name" value="Cytochrome-c3 Hydrogenase, chain B"/>
    <property type="match status" value="1"/>
</dbReference>
<dbReference type="HAMAP" id="MF_01358">
    <property type="entry name" value="NDH1_NuoD"/>
    <property type="match status" value="1"/>
</dbReference>
<dbReference type="InterPro" id="IPR001135">
    <property type="entry name" value="NADH_Q_OxRdtase_suD"/>
</dbReference>
<dbReference type="InterPro" id="IPR014029">
    <property type="entry name" value="NADH_UbQ_OxRdtase_49kDa_CS"/>
</dbReference>
<dbReference type="InterPro" id="IPR022885">
    <property type="entry name" value="NDH1_su_D/H"/>
</dbReference>
<dbReference type="InterPro" id="IPR029014">
    <property type="entry name" value="NiFe-Hase_large"/>
</dbReference>
<dbReference type="NCBIfam" id="TIGR01962">
    <property type="entry name" value="NuoD"/>
    <property type="match status" value="1"/>
</dbReference>
<dbReference type="NCBIfam" id="NF004739">
    <property type="entry name" value="PRK06075.1"/>
    <property type="match status" value="1"/>
</dbReference>
<dbReference type="PANTHER" id="PTHR11993:SF10">
    <property type="entry name" value="NADH DEHYDROGENASE [UBIQUINONE] IRON-SULFUR PROTEIN 2, MITOCHONDRIAL"/>
    <property type="match status" value="1"/>
</dbReference>
<dbReference type="PANTHER" id="PTHR11993">
    <property type="entry name" value="NADH-UBIQUINONE OXIDOREDUCTASE 49 KDA SUBUNIT"/>
    <property type="match status" value="1"/>
</dbReference>
<dbReference type="Pfam" id="PF00346">
    <property type="entry name" value="Complex1_49kDa"/>
    <property type="match status" value="1"/>
</dbReference>
<dbReference type="SUPFAM" id="SSF56762">
    <property type="entry name" value="HydB/Nqo4-like"/>
    <property type="match status" value="1"/>
</dbReference>
<dbReference type="PROSITE" id="PS00535">
    <property type="entry name" value="COMPLEX1_49K"/>
    <property type="match status" value="1"/>
</dbReference>
<protein>
    <recommendedName>
        <fullName evidence="1">NADH-quinone oxidoreductase subunit D</fullName>
        <ecNumber evidence="1">7.1.1.-</ecNumber>
    </recommendedName>
    <alternativeName>
        <fullName evidence="1">NADH dehydrogenase I subunit D</fullName>
    </alternativeName>
    <alternativeName>
        <fullName evidence="1">NDH-1 subunit D</fullName>
    </alternativeName>
</protein>
<gene>
    <name evidence="1" type="primary">nuoD</name>
    <name type="ordered locus">ERGA_CDS_04530</name>
</gene>
<proteinExistence type="inferred from homology"/>
<feature type="chain" id="PRO_0000357811" description="NADH-quinone oxidoreductase subunit D">
    <location>
        <begin position="1"/>
        <end position="393"/>
    </location>
</feature>
<comment type="function">
    <text evidence="1">NDH-1 shuttles electrons from NADH, via FMN and iron-sulfur (Fe-S) centers, to quinones in the respiratory chain. The immediate electron acceptor for the enzyme in this species is believed to be ubiquinone. Couples the redox reaction to proton translocation (for every two electrons transferred, four hydrogen ions are translocated across the cytoplasmic membrane), and thus conserves the redox energy in a proton gradient.</text>
</comment>
<comment type="catalytic activity">
    <reaction evidence="1">
        <text>a quinone + NADH + 5 H(+)(in) = a quinol + NAD(+) + 4 H(+)(out)</text>
        <dbReference type="Rhea" id="RHEA:57888"/>
        <dbReference type="ChEBI" id="CHEBI:15378"/>
        <dbReference type="ChEBI" id="CHEBI:24646"/>
        <dbReference type="ChEBI" id="CHEBI:57540"/>
        <dbReference type="ChEBI" id="CHEBI:57945"/>
        <dbReference type="ChEBI" id="CHEBI:132124"/>
    </reaction>
</comment>
<comment type="subunit">
    <text evidence="1">NDH-1 is composed of 14 different subunits. Subunits NuoB, C, D, E, F, and G constitute the peripheral sector of the complex.</text>
</comment>
<comment type="subcellular location">
    <subcellularLocation>
        <location evidence="1">Cell inner membrane</location>
        <topology evidence="1">Peripheral membrane protein</topology>
        <orientation evidence="1">Cytoplasmic side</orientation>
    </subcellularLocation>
</comment>
<comment type="similarity">
    <text evidence="1">Belongs to the complex I 49 kDa subunit family.</text>
</comment>
<keyword id="KW-0997">Cell inner membrane</keyword>
<keyword id="KW-1003">Cell membrane</keyword>
<keyword id="KW-0472">Membrane</keyword>
<keyword id="KW-0520">NAD</keyword>
<keyword id="KW-0874">Quinone</keyword>
<keyword id="KW-1278">Translocase</keyword>
<keyword id="KW-0813">Transport</keyword>
<keyword id="KW-0830">Ubiquinone</keyword>
<evidence type="ECO:0000255" key="1">
    <source>
        <dbReference type="HAMAP-Rule" id="MF_01358"/>
    </source>
</evidence>
<sequence length="393" mass="44909">MSDHVKITPMTLNFGPQHPAAHGVMRLVLEMGGEVIERIDPHIGLLHRGTEKLIEYKTYLQALPYFDRLDYVSPMAQEHAYSLCVEKLLKCEVPIRAKYLRVIFCELTRILNHLLNISSQALDIGAMTPLLWMFEEREKILNFYERASGARFHSAYIRPGGVAADIPEDLIHDIFQFVNTFPKFMDDVDSLLTENRIWKQRNVDIGVVSKKQALNWGFSGPMLRACGIPWDLRKSQPYEIYDELEFKIPIGEKGDCYDRYLVRMAEIRESISLVEQCLNRIPDGPVKTDDRKIAPPKRSEMKKSMEALIHHFKLYSEGYIVPAGETYMAVEAPKGEFGVYIVSDGTNKPYRCRIRAPGFAHLQAIDMMAKGHMLADLTAIIGSLDIVFGEIDR</sequence>
<organism>
    <name type="scientific">Ehrlichia ruminantium (strain Gardel)</name>
    <dbReference type="NCBI Taxonomy" id="302409"/>
    <lineage>
        <taxon>Bacteria</taxon>
        <taxon>Pseudomonadati</taxon>
        <taxon>Pseudomonadota</taxon>
        <taxon>Alphaproteobacteria</taxon>
        <taxon>Rickettsiales</taxon>
        <taxon>Anaplasmataceae</taxon>
        <taxon>Ehrlichia</taxon>
    </lineage>
</organism>